<sequence>MAKRCEVCGKAPRSGNTVSHSDKKSGRWFRPNLQKVRVVLPDGTIKRMRVCTSCLKSGKVKKYVGQVSEV</sequence>
<gene>
    <name evidence="1" type="primary">rpmB</name>
    <name type="ordered locus">TRQ2_0693</name>
</gene>
<accession>B1L9P8</accession>
<reference key="1">
    <citation type="journal article" date="2011" name="J. Bacteriol.">
        <title>Genome sequence of Thermotoga sp. strain RQ2, a hyperthermophilic bacterium isolated from a geothermally heated region of the seafloor near Ribeira Quente, the Azores.</title>
        <authorList>
            <person name="Swithers K.S."/>
            <person name="DiPippo J.L."/>
            <person name="Bruce D.C."/>
            <person name="Detter C."/>
            <person name="Tapia R."/>
            <person name="Han S."/>
            <person name="Saunders E."/>
            <person name="Goodwin L.A."/>
            <person name="Han J."/>
            <person name="Woyke T."/>
            <person name="Pitluck S."/>
            <person name="Pennacchio L."/>
            <person name="Nolan M."/>
            <person name="Mikhailova N."/>
            <person name="Lykidis A."/>
            <person name="Land M.L."/>
            <person name="Brettin T."/>
            <person name="Stetter K.O."/>
            <person name="Nelson K.E."/>
            <person name="Gogarten J.P."/>
            <person name="Noll K.M."/>
        </authorList>
    </citation>
    <scope>NUCLEOTIDE SEQUENCE [LARGE SCALE GENOMIC DNA]</scope>
    <source>
        <strain>RQ2</strain>
    </source>
</reference>
<comment type="similarity">
    <text evidence="1">Belongs to the bacterial ribosomal protein bL28 family.</text>
</comment>
<name>RL28_THESQ</name>
<feature type="chain" id="PRO_1000121703" description="Large ribosomal subunit protein bL28">
    <location>
        <begin position="1"/>
        <end position="70"/>
    </location>
</feature>
<feature type="region of interest" description="Disordered" evidence="2">
    <location>
        <begin position="1"/>
        <end position="26"/>
    </location>
</feature>
<organism>
    <name type="scientific">Thermotoga sp. (strain RQ2)</name>
    <dbReference type="NCBI Taxonomy" id="126740"/>
    <lineage>
        <taxon>Bacteria</taxon>
        <taxon>Thermotogati</taxon>
        <taxon>Thermotogota</taxon>
        <taxon>Thermotogae</taxon>
        <taxon>Thermotogales</taxon>
        <taxon>Thermotogaceae</taxon>
        <taxon>Thermotoga</taxon>
    </lineage>
</organism>
<dbReference type="EMBL" id="CP000969">
    <property type="protein sequence ID" value="ACB09046.1"/>
    <property type="molecule type" value="Genomic_DNA"/>
</dbReference>
<dbReference type="BMRB" id="B1L9P8"/>
<dbReference type="SMR" id="B1L9P8"/>
<dbReference type="KEGG" id="trq:TRQ2_0693"/>
<dbReference type="HOGENOM" id="CLU_064548_7_0_0"/>
<dbReference type="Proteomes" id="UP000001687">
    <property type="component" value="Chromosome"/>
</dbReference>
<dbReference type="GO" id="GO:1990904">
    <property type="term" value="C:ribonucleoprotein complex"/>
    <property type="evidence" value="ECO:0007669"/>
    <property type="project" value="UniProtKB-KW"/>
</dbReference>
<dbReference type="GO" id="GO:0005840">
    <property type="term" value="C:ribosome"/>
    <property type="evidence" value="ECO:0007669"/>
    <property type="project" value="UniProtKB-KW"/>
</dbReference>
<dbReference type="GO" id="GO:0003735">
    <property type="term" value="F:structural constituent of ribosome"/>
    <property type="evidence" value="ECO:0007669"/>
    <property type="project" value="InterPro"/>
</dbReference>
<dbReference type="GO" id="GO:0006412">
    <property type="term" value="P:translation"/>
    <property type="evidence" value="ECO:0007669"/>
    <property type="project" value="UniProtKB-UniRule"/>
</dbReference>
<dbReference type="Gene3D" id="2.30.170.40">
    <property type="entry name" value="Ribosomal protein L28/L24"/>
    <property type="match status" value="1"/>
</dbReference>
<dbReference type="HAMAP" id="MF_00373">
    <property type="entry name" value="Ribosomal_bL28"/>
    <property type="match status" value="1"/>
</dbReference>
<dbReference type="InterPro" id="IPR050096">
    <property type="entry name" value="Bacterial_rp_bL28"/>
</dbReference>
<dbReference type="InterPro" id="IPR026569">
    <property type="entry name" value="Ribosomal_bL28"/>
</dbReference>
<dbReference type="InterPro" id="IPR034704">
    <property type="entry name" value="Ribosomal_bL28/bL31-like_sf"/>
</dbReference>
<dbReference type="InterPro" id="IPR001383">
    <property type="entry name" value="Ribosomal_bL28_bact-type"/>
</dbReference>
<dbReference type="InterPro" id="IPR037147">
    <property type="entry name" value="Ribosomal_bL28_sf"/>
</dbReference>
<dbReference type="NCBIfam" id="TIGR00009">
    <property type="entry name" value="L28"/>
    <property type="match status" value="1"/>
</dbReference>
<dbReference type="PANTHER" id="PTHR39080">
    <property type="entry name" value="50S RIBOSOMAL PROTEIN L28"/>
    <property type="match status" value="1"/>
</dbReference>
<dbReference type="PANTHER" id="PTHR39080:SF1">
    <property type="entry name" value="LARGE RIBOSOMAL SUBUNIT PROTEIN BL28A"/>
    <property type="match status" value="1"/>
</dbReference>
<dbReference type="Pfam" id="PF00830">
    <property type="entry name" value="Ribosomal_L28"/>
    <property type="match status" value="1"/>
</dbReference>
<dbReference type="SUPFAM" id="SSF143800">
    <property type="entry name" value="L28p-like"/>
    <property type="match status" value="1"/>
</dbReference>
<evidence type="ECO:0000255" key="1">
    <source>
        <dbReference type="HAMAP-Rule" id="MF_00373"/>
    </source>
</evidence>
<evidence type="ECO:0000256" key="2">
    <source>
        <dbReference type="SAM" id="MobiDB-lite"/>
    </source>
</evidence>
<evidence type="ECO:0000305" key="3"/>
<keyword id="KW-0687">Ribonucleoprotein</keyword>
<keyword id="KW-0689">Ribosomal protein</keyword>
<proteinExistence type="inferred from homology"/>
<protein>
    <recommendedName>
        <fullName evidence="1">Large ribosomal subunit protein bL28</fullName>
    </recommendedName>
    <alternativeName>
        <fullName evidence="3">50S ribosomal protein L28</fullName>
    </alternativeName>
</protein>